<reference key="1">
    <citation type="submission" date="1994-08" db="EMBL/GenBank/DDBJ databases">
        <title>Molecular evolution of the sec appartus in plastids.</title>
        <authorList>
            <person name="Valentin K.-U."/>
            <person name="Fischer S."/>
            <person name="Vogel H."/>
        </authorList>
    </citation>
    <scope>NUCLEOTIDE SEQUENCE [GENOMIC DNA]</scope>
</reference>
<geneLocation type="chloroplast"/>
<name>RK34_OLILU</name>
<organism>
    <name type="scientific">Olisthodiscus luteus</name>
    <name type="common">Marine phytoflagellate</name>
    <dbReference type="NCBI Taxonomy" id="83000"/>
    <lineage>
        <taxon>Eukaryota</taxon>
        <taxon>Sar</taxon>
        <taxon>Stramenopiles</taxon>
        <taxon>Ochrophyta</taxon>
        <taxon>Olisthodiscophyceae</taxon>
        <taxon>Olisthodiscaceae</taxon>
        <taxon>Olisthodiscus</taxon>
    </lineage>
</organism>
<evidence type="ECO:0000305" key="1"/>
<accession>P49164</accession>
<gene>
    <name type="primary">rpl34</name>
</gene>
<feature type="chain" id="PRO_0000187518" description="Large ribosomal subunit protein bL34c">
    <location>
        <begin position="1"/>
        <end position="42"/>
    </location>
</feature>
<protein>
    <recommendedName>
        <fullName evidence="1">Large ribosomal subunit protein bL34c</fullName>
    </recommendedName>
    <alternativeName>
        <fullName>50S ribosomal protein L34, chloroplastic</fullName>
    </alternativeName>
</protein>
<comment type="subcellular location">
    <subcellularLocation>
        <location>Plastid</location>
        <location>Chloroplast</location>
    </subcellularLocation>
</comment>
<comment type="similarity">
    <text evidence="1">Belongs to the bacterial ribosomal protein bL34 family.</text>
</comment>
<sequence length="42" mass="4905">MTKRTLEGTKRKSIRKSGFRARMATKLGRKVLNKRRQKGENS</sequence>
<dbReference type="EMBL" id="Z35718">
    <property type="protein sequence ID" value="CAA84794.1"/>
    <property type="molecule type" value="Genomic_DNA"/>
</dbReference>
<dbReference type="PIR" id="S49217">
    <property type="entry name" value="S49217"/>
</dbReference>
<dbReference type="SMR" id="P49164"/>
<dbReference type="GO" id="GO:0009507">
    <property type="term" value="C:chloroplast"/>
    <property type="evidence" value="ECO:0007669"/>
    <property type="project" value="UniProtKB-SubCell"/>
</dbReference>
<dbReference type="GO" id="GO:1990904">
    <property type="term" value="C:ribonucleoprotein complex"/>
    <property type="evidence" value="ECO:0007669"/>
    <property type="project" value="UniProtKB-KW"/>
</dbReference>
<dbReference type="GO" id="GO:0005840">
    <property type="term" value="C:ribosome"/>
    <property type="evidence" value="ECO:0007669"/>
    <property type="project" value="UniProtKB-KW"/>
</dbReference>
<dbReference type="GO" id="GO:0003735">
    <property type="term" value="F:structural constituent of ribosome"/>
    <property type="evidence" value="ECO:0007669"/>
    <property type="project" value="InterPro"/>
</dbReference>
<dbReference type="GO" id="GO:0006412">
    <property type="term" value="P:translation"/>
    <property type="evidence" value="ECO:0007669"/>
    <property type="project" value="UniProtKB-UniRule"/>
</dbReference>
<dbReference type="Gene3D" id="1.10.287.3980">
    <property type="match status" value="1"/>
</dbReference>
<dbReference type="HAMAP" id="MF_00391">
    <property type="entry name" value="Ribosomal_bL34"/>
    <property type="match status" value="1"/>
</dbReference>
<dbReference type="InterPro" id="IPR000271">
    <property type="entry name" value="Ribosomal_bL34"/>
</dbReference>
<dbReference type="InterPro" id="IPR020939">
    <property type="entry name" value="Ribosomal_bL34_CS"/>
</dbReference>
<dbReference type="NCBIfam" id="TIGR01030">
    <property type="entry name" value="rpmH_bact"/>
    <property type="match status" value="1"/>
</dbReference>
<dbReference type="Pfam" id="PF00468">
    <property type="entry name" value="Ribosomal_L34"/>
    <property type="match status" value="1"/>
</dbReference>
<dbReference type="PROSITE" id="PS00784">
    <property type="entry name" value="RIBOSOMAL_L34"/>
    <property type="match status" value="1"/>
</dbReference>
<proteinExistence type="inferred from homology"/>
<keyword id="KW-0150">Chloroplast</keyword>
<keyword id="KW-0934">Plastid</keyword>
<keyword id="KW-0687">Ribonucleoprotein</keyword>
<keyword id="KW-0689">Ribosomal protein</keyword>